<keyword id="KW-0694">RNA-binding</keyword>
<keyword id="KW-0804">Transcription</keyword>
<keyword id="KW-0889">Transcription antitermination</keyword>
<keyword id="KW-0805">Transcription regulation</keyword>
<protein>
    <recommendedName>
        <fullName evidence="1">Transcription antitermination protein NusB</fullName>
    </recommendedName>
    <alternativeName>
        <fullName evidence="1">Antitermination factor NusB</fullName>
    </alternativeName>
</protein>
<feature type="chain" id="PRO_1000092566" description="Transcription antitermination protein NusB">
    <location>
        <begin position="1"/>
        <end position="127"/>
    </location>
</feature>
<proteinExistence type="inferred from homology"/>
<gene>
    <name evidence="1" type="primary">nusB</name>
    <name type="ordered locus">Bsph_3515</name>
</gene>
<dbReference type="EMBL" id="CP000817">
    <property type="protein sequence ID" value="ACA41003.1"/>
    <property type="molecule type" value="Genomic_DNA"/>
</dbReference>
<dbReference type="RefSeq" id="WP_012295062.1">
    <property type="nucleotide sequence ID" value="NC_010382.1"/>
</dbReference>
<dbReference type="SMR" id="B1HRY0"/>
<dbReference type="EnsemblBacteria" id="ACA41003">
    <property type="protein sequence ID" value="ACA41003"/>
    <property type="gene ID" value="Bsph_3515"/>
</dbReference>
<dbReference type="KEGG" id="lsp:Bsph_3515"/>
<dbReference type="HOGENOM" id="CLU_087843_3_3_9"/>
<dbReference type="Proteomes" id="UP000002164">
    <property type="component" value="Chromosome"/>
</dbReference>
<dbReference type="GO" id="GO:0005829">
    <property type="term" value="C:cytosol"/>
    <property type="evidence" value="ECO:0007669"/>
    <property type="project" value="TreeGrafter"/>
</dbReference>
<dbReference type="GO" id="GO:0003723">
    <property type="term" value="F:RNA binding"/>
    <property type="evidence" value="ECO:0007669"/>
    <property type="project" value="UniProtKB-UniRule"/>
</dbReference>
<dbReference type="GO" id="GO:0006353">
    <property type="term" value="P:DNA-templated transcription termination"/>
    <property type="evidence" value="ECO:0007669"/>
    <property type="project" value="UniProtKB-UniRule"/>
</dbReference>
<dbReference type="GO" id="GO:0031564">
    <property type="term" value="P:transcription antitermination"/>
    <property type="evidence" value="ECO:0007669"/>
    <property type="project" value="UniProtKB-KW"/>
</dbReference>
<dbReference type="CDD" id="cd00619">
    <property type="entry name" value="Terminator_NusB"/>
    <property type="match status" value="1"/>
</dbReference>
<dbReference type="Gene3D" id="1.10.940.10">
    <property type="entry name" value="NusB-like"/>
    <property type="match status" value="1"/>
</dbReference>
<dbReference type="HAMAP" id="MF_00073">
    <property type="entry name" value="NusB"/>
    <property type="match status" value="1"/>
</dbReference>
<dbReference type="InterPro" id="IPR035926">
    <property type="entry name" value="NusB-like_sf"/>
</dbReference>
<dbReference type="InterPro" id="IPR011605">
    <property type="entry name" value="NusB_fam"/>
</dbReference>
<dbReference type="InterPro" id="IPR006027">
    <property type="entry name" value="NusB_RsmB_TIM44"/>
</dbReference>
<dbReference type="NCBIfam" id="TIGR01951">
    <property type="entry name" value="nusB"/>
    <property type="match status" value="1"/>
</dbReference>
<dbReference type="PANTHER" id="PTHR11078:SF3">
    <property type="entry name" value="ANTITERMINATION NUSB DOMAIN-CONTAINING PROTEIN"/>
    <property type="match status" value="1"/>
</dbReference>
<dbReference type="PANTHER" id="PTHR11078">
    <property type="entry name" value="N UTILIZATION SUBSTANCE PROTEIN B-RELATED"/>
    <property type="match status" value="1"/>
</dbReference>
<dbReference type="Pfam" id="PF01029">
    <property type="entry name" value="NusB"/>
    <property type="match status" value="1"/>
</dbReference>
<dbReference type="SUPFAM" id="SSF48013">
    <property type="entry name" value="NusB-like"/>
    <property type="match status" value="1"/>
</dbReference>
<reference key="1">
    <citation type="journal article" date="2008" name="J. Bacteriol.">
        <title>Complete genome sequence of the mosquitocidal bacterium Bacillus sphaericus C3-41 and comparison with those of closely related Bacillus species.</title>
        <authorList>
            <person name="Hu X."/>
            <person name="Fan W."/>
            <person name="Han B."/>
            <person name="Liu H."/>
            <person name="Zheng D."/>
            <person name="Li Q."/>
            <person name="Dong W."/>
            <person name="Yan J."/>
            <person name="Gao M."/>
            <person name="Berry C."/>
            <person name="Yuan Z."/>
        </authorList>
    </citation>
    <scope>NUCLEOTIDE SEQUENCE [LARGE SCALE GENOMIC DNA]</scope>
    <source>
        <strain>C3-41</strain>
    </source>
</reference>
<organism>
    <name type="scientific">Lysinibacillus sphaericus (strain C3-41)</name>
    <dbReference type="NCBI Taxonomy" id="444177"/>
    <lineage>
        <taxon>Bacteria</taxon>
        <taxon>Bacillati</taxon>
        <taxon>Bacillota</taxon>
        <taxon>Bacilli</taxon>
        <taxon>Bacillales</taxon>
        <taxon>Bacillaceae</taxon>
        <taxon>Lysinibacillus</taxon>
    </lineage>
</organism>
<accession>B1HRY0</accession>
<name>NUSB_LYSSC</name>
<comment type="function">
    <text evidence="1">Involved in transcription antitermination. Required for transcription of ribosomal RNA (rRNA) genes. Binds specifically to the boxA antiterminator sequence of the ribosomal RNA (rrn) operons.</text>
</comment>
<comment type="similarity">
    <text evidence="1">Belongs to the NusB family.</text>
</comment>
<evidence type="ECO:0000255" key="1">
    <source>
        <dbReference type="HAMAP-Rule" id="MF_00073"/>
    </source>
</evidence>
<sequence length="127" mass="14618">MKRHEAREKALQVLFQLDNTDLTVEEAMGHIKGQPTNVFYEKIVTGTAEHLEEIDATLEQHLEKWSLARLPKIERTVLRLAVYELLYMPETPKRVVLNEAIELCKTFGDDSSSKFVNGVLSKFTEQE</sequence>